<name>HARS1_MESAU</name>
<gene>
    <name type="primary">HARS1</name>
    <name type="synonym">HARS</name>
    <name type="synonym">HRS</name>
</gene>
<accession>P07178</accession>
<feature type="chain" id="PRO_0000136333" description="Histidine--tRNA ligase, cytoplasmic">
    <location>
        <begin position="1"/>
        <end position="508"/>
    </location>
</feature>
<feature type="domain" description="WHEP-TRS" evidence="4">
    <location>
        <begin position="3"/>
        <end position="59"/>
    </location>
</feature>
<feature type="binding site" evidence="2">
    <location>
        <begin position="130"/>
        <end position="132"/>
    </location>
    <ligand>
        <name>L-histidine</name>
        <dbReference type="ChEBI" id="CHEBI:57595"/>
    </ligand>
</feature>
<feature type="binding site" evidence="2">
    <location>
        <position position="157"/>
    </location>
    <ligand>
        <name>L-histidine</name>
        <dbReference type="ChEBI" id="CHEBI:57595"/>
    </ligand>
</feature>
<feature type="binding site" evidence="2">
    <location>
        <position position="177"/>
    </location>
    <ligand>
        <name>L-histidine</name>
        <dbReference type="ChEBI" id="CHEBI:57595"/>
    </ligand>
</feature>
<feature type="binding site" evidence="2">
    <location>
        <position position="326"/>
    </location>
    <ligand>
        <name>L-histidine</name>
        <dbReference type="ChEBI" id="CHEBI:57595"/>
    </ligand>
</feature>
<feature type="binding site" evidence="2">
    <location>
        <begin position="330"/>
        <end position="331"/>
    </location>
    <ligand>
        <name>L-histidine</name>
        <dbReference type="ChEBI" id="CHEBI:57595"/>
    </ligand>
</feature>
<feature type="modified residue" description="Phosphoserine" evidence="3">
    <location>
        <position position="66"/>
    </location>
</feature>
<comment type="function">
    <text evidence="2">Catalyzes the ATP-dependent ligation of histidine to the 3'-end of its cognate tRNA, via the formation of an aminoacyl-adenylate intermediate (His-AMP). Plays a role in axon guidance.</text>
</comment>
<comment type="catalytic activity">
    <reaction evidence="2">
        <text>tRNA(His) + L-histidine + ATP = L-histidyl-tRNA(His) + AMP + diphosphate + H(+)</text>
        <dbReference type="Rhea" id="RHEA:17313"/>
        <dbReference type="Rhea" id="RHEA-COMP:9665"/>
        <dbReference type="Rhea" id="RHEA-COMP:9689"/>
        <dbReference type="ChEBI" id="CHEBI:15378"/>
        <dbReference type="ChEBI" id="CHEBI:30616"/>
        <dbReference type="ChEBI" id="CHEBI:33019"/>
        <dbReference type="ChEBI" id="CHEBI:57595"/>
        <dbReference type="ChEBI" id="CHEBI:78442"/>
        <dbReference type="ChEBI" id="CHEBI:78527"/>
        <dbReference type="ChEBI" id="CHEBI:456215"/>
        <dbReference type="EC" id="6.1.1.21"/>
    </reaction>
</comment>
<comment type="subunit">
    <text evidence="2">Homodimer.</text>
</comment>
<comment type="subcellular location">
    <subcellularLocation>
        <location evidence="1">Cytoplasm</location>
    </subcellularLocation>
</comment>
<comment type="similarity">
    <text evidence="5">Belongs to the class-II aminoacyl-tRNA synthetase family.</text>
</comment>
<protein>
    <recommendedName>
        <fullName>Histidine--tRNA ligase, cytoplasmic</fullName>
        <ecNumber evidence="2">6.1.1.21</ecNumber>
    </recommendedName>
    <alternativeName>
        <fullName>Histidyl-tRNA synthetase</fullName>
        <shortName>HisRS</shortName>
    </alternativeName>
</protein>
<keyword id="KW-0030">Aminoacyl-tRNA synthetase</keyword>
<keyword id="KW-0067">ATP-binding</keyword>
<keyword id="KW-0963">Cytoplasm</keyword>
<keyword id="KW-0436">Ligase</keyword>
<keyword id="KW-0547">Nucleotide-binding</keyword>
<keyword id="KW-0597">Phosphoprotein</keyword>
<keyword id="KW-0648">Protein biosynthesis</keyword>
<keyword id="KW-1185">Reference proteome</keyword>
<proteinExistence type="evidence at transcript level"/>
<reference key="1">
    <citation type="journal article" date="1987" name="Nucleic Acids Res.">
        <title>Isolation, structure and expression of mammalian genes for histidyl-tRNA synthetase.</title>
        <authorList>
            <person name="Tsui F.W.L."/>
            <person name="Siminovitch L."/>
        </authorList>
    </citation>
    <scope>NUCLEOTIDE SEQUENCE [MRNA]</scope>
</reference>
<reference key="2">
    <citation type="journal article" date="1987" name="Gene">
        <title>Structural analysis of the 5' region of the chromosomal gene for hamster histidyl-tRNA synthetase.</title>
        <authorList>
            <person name="Tsui F.W.L."/>
            <person name="Siminovitch L."/>
        </authorList>
    </citation>
    <scope>NUCLEOTIDE SEQUENCE [GENOMIC DNA] OF 1-3</scope>
</reference>
<evidence type="ECO:0000250" key="1">
    <source>
        <dbReference type="UniProtKB" id="F1Q5D5"/>
    </source>
</evidence>
<evidence type="ECO:0000250" key="2">
    <source>
        <dbReference type="UniProtKB" id="P12081"/>
    </source>
</evidence>
<evidence type="ECO:0000250" key="3">
    <source>
        <dbReference type="UniProtKB" id="Q99KK9"/>
    </source>
</evidence>
<evidence type="ECO:0000255" key="4">
    <source>
        <dbReference type="PROSITE-ProRule" id="PRU00531"/>
    </source>
</evidence>
<evidence type="ECO:0000305" key="5"/>
<organism>
    <name type="scientific">Mesocricetus auratus</name>
    <name type="common">Golden hamster</name>
    <dbReference type="NCBI Taxonomy" id="10036"/>
    <lineage>
        <taxon>Eukaryota</taxon>
        <taxon>Metazoa</taxon>
        <taxon>Chordata</taxon>
        <taxon>Craniata</taxon>
        <taxon>Vertebrata</taxon>
        <taxon>Euteleostomi</taxon>
        <taxon>Mammalia</taxon>
        <taxon>Eutheria</taxon>
        <taxon>Euarchontoglires</taxon>
        <taxon>Glires</taxon>
        <taxon>Rodentia</taxon>
        <taxon>Myomorpha</taxon>
        <taxon>Muroidea</taxon>
        <taxon>Cricetidae</taxon>
        <taxon>Cricetinae</taxon>
        <taxon>Mesocricetus</taxon>
    </lineage>
</organism>
<sequence>MASPALEELVLNSRHRLVRGLKQQKASADQIEEEVAKLLKLKAQLGHDESKQKFVLKTPKGTRDYSPRQMAVREKVFDVIICCFKRHGAEVIDTPVFELKETLMGKYGQDCKLIYDLKDQGGELLSLRYDLTVPFGRYLAMNNLTNIKRYHIAKVYRRDNPAMTRGRYLNSITVDFDIAGQFDPMIPDAECLKIMCEILSSLQIGKFLVKVNDRRILDGMFAVCGVPDSKFRTICSSVDKLDKVSWEEVKNEMVGEKGLAPEVADRIGDYVQQHGEVCLVEQLLQDPKLSQNKQAVEGLGDLKLLFEYLTLFGIDDKISFDLSLARGLDYYTGVIYVAVLLQMPTGAGEEPWCGQCGCWRRYDGLVGMFDPKGRKVPCVGLSIGVERIFSIVEQRLEALEEKVRTTETQVLVASAQKKLAGGETKACLQLWDAGIKAELLYKKNPKLLNQLQYCEETGIPLVAIIGEQELKDGVIKLRSVASREEVDVRREDLVEEIRRRTNQPLYVC</sequence>
<dbReference type="EC" id="6.1.1.21" evidence="2"/>
<dbReference type="EMBL" id="X05346">
    <property type="protein sequence ID" value="CAA28957.1"/>
    <property type="molecule type" value="mRNA"/>
</dbReference>
<dbReference type="EMBL" id="M19147">
    <property type="status" value="NOT_ANNOTATED_CDS"/>
    <property type="molecule type" value="Genomic_DNA"/>
</dbReference>
<dbReference type="SMR" id="P07178"/>
<dbReference type="STRING" id="10036.ENSMAUP00000015627"/>
<dbReference type="BRENDA" id="6.1.1.21">
    <property type="organism ID" value="3239"/>
</dbReference>
<dbReference type="Proteomes" id="UP000189706">
    <property type="component" value="Unplaced"/>
</dbReference>
<dbReference type="GO" id="GO:0005737">
    <property type="term" value="C:cytoplasm"/>
    <property type="evidence" value="ECO:0000250"/>
    <property type="project" value="UniProtKB"/>
</dbReference>
<dbReference type="GO" id="GO:0005829">
    <property type="term" value="C:cytosol"/>
    <property type="evidence" value="ECO:0007669"/>
    <property type="project" value="TreeGrafter"/>
</dbReference>
<dbReference type="GO" id="GO:0005739">
    <property type="term" value="C:mitochondrion"/>
    <property type="evidence" value="ECO:0007669"/>
    <property type="project" value="TreeGrafter"/>
</dbReference>
<dbReference type="GO" id="GO:0005524">
    <property type="term" value="F:ATP binding"/>
    <property type="evidence" value="ECO:0000250"/>
    <property type="project" value="UniProtKB"/>
</dbReference>
<dbReference type="GO" id="GO:0004821">
    <property type="term" value="F:histidine-tRNA ligase activity"/>
    <property type="evidence" value="ECO:0000250"/>
    <property type="project" value="UniProtKB"/>
</dbReference>
<dbReference type="GO" id="GO:0042803">
    <property type="term" value="F:protein homodimerization activity"/>
    <property type="evidence" value="ECO:0000250"/>
    <property type="project" value="UniProtKB"/>
</dbReference>
<dbReference type="GO" id="GO:0003723">
    <property type="term" value="F:RNA binding"/>
    <property type="evidence" value="ECO:0007669"/>
    <property type="project" value="TreeGrafter"/>
</dbReference>
<dbReference type="GO" id="GO:0006427">
    <property type="term" value="P:histidyl-tRNA aminoacylation"/>
    <property type="evidence" value="ECO:0000250"/>
    <property type="project" value="UniProtKB"/>
</dbReference>
<dbReference type="GO" id="GO:0032543">
    <property type="term" value="P:mitochondrial translation"/>
    <property type="evidence" value="ECO:0007669"/>
    <property type="project" value="TreeGrafter"/>
</dbReference>
<dbReference type="CDD" id="cd00773">
    <property type="entry name" value="HisRS-like_core"/>
    <property type="match status" value="1"/>
</dbReference>
<dbReference type="CDD" id="cd00859">
    <property type="entry name" value="HisRS_anticodon"/>
    <property type="match status" value="1"/>
</dbReference>
<dbReference type="FunFam" id="3.40.50.800:FF:000008">
    <property type="entry name" value="histidine--tRNA ligase, cytoplasmic isoform X1"/>
    <property type="match status" value="1"/>
</dbReference>
<dbReference type="FunFam" id="3.30.930.10:FF:000021">
    <property type="entry name" value="Probable histidine--tRNA ligase, mitochondrial"/>
    <property type="match status" value="1"/>
</dbReference>
<dbReference type="Gene3D" id="3.40.50.800">
    <property type="entry name" value="Anticodon-binding domain"/>
    <property type="match status" value="1"/>
</dbReference>
<dbReference type="Gene3D" id="3.30.930.10">
    <property type="entry name" value="Bira Bifunctional Protein, Domain 2"/>
    <property type="match status" value="1"/>
</dbReference>
<dbReference type="Gene3D" id="1.10.287.10">
    <property type="entry name" value="S15/NS1, RNA-binding"/>
    <property type="match status" value="1"/>
</dbReference>
<dbReference type="InterPro" id="IPR045864">
    <property type="entry name" value="aa-tRNA-synth_II/BPL/LPL"/>
</dbReference>
<dbReference type="InterPro" id="IPR004154">
    <property type="entry name" value="Anticodon-bd"/>
</dbReference>
<dbReference type="InterPro" id="IPR036621">
    <property type="entry name" value="Anticodon-bd_dom_sf"/>
</dbReference>
<dbReference type="InterPro" id="IPR041715">
    <property type="entry name" value="HisRS-like_core"/>
</dbReference>
<dbReference type="InterPro" id="IPR004516">
    <property type="entry name" value="HisRS/HisZ"/>
</dbReference>
<dbReference type="InterPro" id="IPR033656">
    <property type="entry name" value="HisRS_anticodon"/>
</dbReference>
<dbReference type="InterPro" id="IPR009068">
    <property type="entry name" value="uS15_NS1_RNA-bd_sf"/>
</dbReference>
<dbReference type="InterPro" id="IPR000738">
    <property type="entry name" value="WHEP-TRS_dom"/>
</dbReference>
<dbReference type="PANTHER" id="PTHR11476:SF8">
    <property type="entry name" value="HISTIDINE--TRNA LIGASE, CYTOPLASMIC"/>
    <property type="match status" value="1"/>
</dbReference>
<dbReference type="PANTHER" id="PTHR11476">
    <property type="entry name" value="HISTIDYL-TRNA SYNTHETASE"/>
    <property type="match status" value="1"/>
</dbReference>
<dbReference type="Pfam" id="PF03129">
    <property type="entry name" value="HGTP_anticodon"/>
    <property type="match status" value="1"/>
</dbReference>
<dbReference type="Pfam" id="PF13393">
    <property type="entry name" value="tRNA-synt_His"/>
    <property type="match status" value="1"/>
</dbReference>
<dbReference type="PIRSF" id="PIRSF001549">
    <property type="entry name" value="His-tRNA_synth"/>
    <property type="match status" value="1"/>
</dbReference>
<dbReference type="SMART" id="SM00991">
    <property type="entry name" value="WHEP-TRS"/>
    <property type="match status" value="1"/>
</dbReference>
<dbReference type="SUPFAM" id="SSF52954">
    <property type="entry name" value="Class II aaRS ABD-related"/>
    <property type="match status" value="1"/>
</dbReference>
<dbReference type="SUPFAM" id="SSF55681">
    <property type="entry name" value="Class II aaRS and biotin synthetases"/>
    <property type="match status" value="1"/>
</dbReference>
<dbReference type="SUPFAM" id="SSF47060">
    <property type="entry name" value="S15/NS1 RNA-binding domain"/>
    <property type="match status" value="1"/>
</dbReference>
<dbReference type="PROSITE" id="PS00762">
    <property type="entry name" value="WHEP_TRS_1"/>
    <property type="match status" value="1"/>
</dbReference>
<dbReference type="PROSITE" id="PS51185">
    <property type="entry name" value="WHEP_TRS_2"/>
    <property type="match status" value="1"/>
</dbReference>